<dbReference type="EC" id="3.6.1.-" evidence="1"/>
<dbReference type="EMBL" id="AE004091">
    <property type="protein sequence ID" value="AAG06360.1"/>
    <property type="molecule type" value="Genomic_DNA"/>
</dbReference>
<dbReference type="PIR" id="D83273">
    <property type="entry name" value="D83273"/>
</dbReference>
<dbReference type="RefSeq" id="NP_251662.1">
    <property type="nucleotide sequence ID" value="NC_002516.2"/>
</dbReference>
<dbReference type="RefSeq" id="WP_003113992.1">
    <property type="nucleotide sequence ID" value="NZ_QZGE01000009.1"/>
</dbReference>
<dbReference type="SMR" id="Q9HZN2"/>
<dbReference type="FunCoup" id="Q9HZN2">
    <property type="interactions" value="161"/>
</dbReference>
<dbReference type="STRING" id="208964.PA2972"/>
<dbReference type="PaxDb" id="208964-PA2972"/>
<dbReference type="DNASU" id="879799"/>
<dbReference type="GeneID" id="879799"/>
<dbReference type="KEGG" id="pae:PA2972"/>
<dbReference type="PATRIC" id="fig|208964.12.peg.3118"/>
<dbReference type="PseudoCAP" id="PA2972"/>
<dbReference type="HOGENOM" id="CLU_040416_1_0_6"/>
<dbReference type="InParanoid" id="Q9HZN2"/>
<dbReference type="OrthoDB" id="9813694at2"/>
<dbReference type="PhylomeDB" id="Q9HZN2"/>
<dbReference type="BioCyc" id="PAER208964:G1FZ6-3024-MONOMER"/>
<dbReference type="Proteomes" id="UP000002438">
    <property type="component" value="Chromosome"/>
</dbReference>
<dbReference type="GO" id="GO:0005737">
    <property type="term" value="C:cytoplasm"/>
    <property type="evidence" value="ECO:0007669"/>
    <property type="project" value="UniProtKB-SubCell"/>
</dbReference>
<dbReference type="GO" id="GO:0047429">
    <property type="term" value="F:nucleoside triphosphate diphosphatase activity"/>
    <property type="evidence" value="ECO:0000318"/>
    <property type="project" value="GO_Central"/>
</dbReference>
<dbReference type="GO" id="GO:0009117">
    <property type="term" value="P:nucleotide metabolic process"/>
    <property type="evidence" value="ECO:0007669"/>
    <property type="project" value="UniProtKB-KW"/>
</dbReference>
<dbReference type="CDD" id="cd00555">
    <property type="entry name" value="Maf"/>
    <property type="match status" value="1"/>
</dbReference>
<dbReference type="FunFam" id="3.90.950.10:FF:000005">
    <property type="entry name" value="7-methyl-GTP pyrophosphatase"/>
    <property type="match status" value="1"/>
</dbReference>
<dbReference type="Gene3D" id="3.90.950.10">
    <property type="match status" value="1"/>
</dbReference>
<dbReference type="HAMAP" id="MF_00528">
    <property type="entry name" value="Maf"/>
    <property type="match status" value="1"/>
</dbReference>
<dbReference type="InterPro" id="IPR029001">
    <property type="entry name" value="ITPase-like_fam"/>
</dbReference>
<dbReference type="InterPro" id="IPR003697">
    <property type="entry name" value="Maf-like"/>
</dbReference>
<dbReference type="NCBIfam" id="TIGR00172">
    <property type="entry name" value="maf"/>
    <property type="match status" value="1"/>
</dbReference>
<dbReference type="PANTHER" id="PTHR43213:SF10">
    <property type="entry name" value="7-METHYL-GTP PYROPHOSPHATASE"/>
    <property type="match status" value="1"/>
</dbReference>
<dbReference type="PANTHER" id="PTHR43213">
    <property type="entry name" value="BIFUNCTIONAL DTTP/UTP PYROPHOSPHATASE/METHYLTRANSFERASE PROTEIN-RELATED"/>
    <property type="match status" value="1"/>
</dbReference>
<dbReference type="Pfam" id="PF02545">
    <property type="entry name" value="Maf"/>
    <property type="match status" value="1"/>
</dbReference>
<dbReference type="PIRSF" id="PIRSF006305">
    <property type="entry name" value="Maf"/>
    <property type="match status" value="1"/>
</dbReference>
<dbReference type="SUPFAM" id="SSF52972">
    <property type="entry name" value="ITPase-like"/>
    <property type="match status" value="1"/>
</dbReference>
<reference key="1">
    <citation type="journal article" date="2000" name="Nature">
        <title>Complete genome sequence of Pseudomonas aeruginosa PAO1, an opportunistic pathogen.</title>
        <authorList>
            <person name="Stover C.K."/>
            <person name="Pham X.-Q.T."/>
            <person name="Erwin A.L."/>
            <person name="Mizoguchi S.D."/>
            <person name="Warrener P."/>
            <person name="Hickey M.J."/>
            <person name="Brinkman F.S.L."/>
            <person name="Hufnagle W.O."/>
            <person name="Kowalik D.J."/>
            <person name="Lagrou M."/>
            <person name="Garber R.L."/>
            <person name="Goltry L."/>
            <person name="Tolentino E."/>
            <person name="Westbrock-Wadman S."/>
            <person name="Yuan Y."/>
            <person name="Brody L.L."/>
            <person name="Coulter S.N."/>
            <person name="Folger K.R."/>
            <person name="Kas A."/>
            <person name="Larbig K."/>
            <person name="Lim R.M."/>
            <person name="Smith K.A."/>
            <person name="Spencer D.H."/>
            <person name="Wong G.K.-S."/>
            <person name="Wu Z."/>
            <person name="Paulsen I.T."/>
            <person name="Reizer J."/>
            <person name="Saier M.H. Jr."/>
            <person name="Hancock R.E.W."/>
            <person name="Lory S."/>
            <person name="Olson M.V."/>
        </authorList>
    </citation>
    <scope>NUCLEOTIDE SEQUENCE [LARGE SCALE GENOMIC DNA]</scope>
    <source>
        <strain>ATCC 15692 / DSM 22644 / CIP 104116 / JCM 14847 / LMG 12228 / 1C / PRS 101 / PAO1</strain>
    </source>
</reference>
<evidence type="ECO:0000255" key="1">
    <source>
        <dbReference type="HAMAP-Rule" id="MF_00528"/>
    </source>
</evidence>
<accession>Q9HZN2</accession>
<feature type="chain" id="PRO_0000123044" description="7-methyl-GTP pyrophosphatase">
    <location>
        <begin position="1"/>
        <end position="192"/>
    </location>
</feature>
<feature type="active site" description="Proton acceptor" evidence="1">
    <location>
        <position position="69"/>
    </location>
</feature>
<feature type="site" description="Important for substrate specificity" evidence="1">
    <location>
        <position position="12"/>
    </location>
</feature>
<feature type="site" description="Important for substrate specificity" evidence="1">
    <location>
        <position position="70"/>
    </location>
</feature>
<feature type="site" description="Important for substrate specificity" evidence="1">
    <location>
        <position position="154"/>
    </location>
</feature>
<sequence length="192" mass="21054">MPDLILASSSPYRRELLTRLRLPFESASPDIDESHRAGESAEELVRRLSASKAEALAGRYPQHLVIGSDQVAVLDGNILGKPHTPERAIQQLRDASGKSVTFLTGLALLNSASRRIQVACVPFTVHFRHLDESRIRRYVEAERPLDCAGSFKAEGLGVSLFRSTEGEDATSLVGLPLIRLVDMLLEEGVEIP</sequence>
<comment type="function">
    <text evidence="1">Nucleoside triphosphate pyrophosphatase that hydrolyzes 7-methyl-GTP (m(7)GTP). May have a dual role in cell division arrest and in preventing the incorporation of modified nucleotides into cellular nucleic acids.</text>
</comment>
<comment type="catalytic activity">
    <reaction evidence="1">
        <text>N(7)-methyl-GTP + H2O = N(7)-methyl-GMP + diphosphate + H(+)</text>
        <dbReference type="Rhea" id="RHEA:58744"/>
        <dbReference type="ChEBI" id="CHEBI:15377"/>
        <dbReference type="ChEBI" id="CHEBI:15378"/>
        <dbReference type="ChEBI" id="CHEBI:33019"/>
        <dbReference type="ChEBI" id="CHEBI:58285"/>
        <dbReference type="ChEBI" id="CHEBI:87133"/>
    </reaction>
</comment>
<comment type="cofactor">
    <cofactor evidence="1">
        <name>a divalent metal cation</name>
        <dbReference type="ChEBI" id="CHEBI:60240"/>
    </cofactor>
</comment>
<comment type="subcellular location">
    <subcellularLocation>
        <location evidence="1">Cytoplasm</location>
    </subcellularLocation>
</comment>
<comment type="similarity">
    <text evidence="1">Belongs to the Maf family. YceF subfamily.</text>
</comment>
<proteinExistence type="inferred from homology"/>
<keyword id="KW-0963">Cytoplasm</keyword>
<keyword id="KW-0378">Hydrolase</keyword>
<keyword id="KW-0546">Nucleotide metabolism</keyword>
<keyword id="KW-1185">Reference proteome</keyword>
<name>NTPPB_PSEAE</name>
<gene>
    <name type="ordered locus">PA2972</name>
</gene>
<organism>
    <name type="scientific">Pseudomonas aeruginosa (strain ATCC 15692 / DSM 22644 / CIP 104116 / JCM 14847 / LMG 12228 / 1C / PRS 101 / PAO1)</name>
    <dbReference type="NCBI Taxonomy" id="208964"/>
    <lineage>
        <taxon>Bacteria</taxon>
        <taxon>Pseudomonadati</taxon>
        <taxon>Pseudomonadota</taxon>
        <taxon>Gammaproteobacteria</taxon>
        <taxon>Pseudomonadales</taxon>
        <taxon>Pseudomonadaceae</taxon>
        <taxon>Pseudomonas</taxon>
    </lineage>
</organism>
<protein>
    <recommendedName>
        <fullName evidence="1">7-methyl-GTP pyrophosphatase</fullName>
        <shortName evidence="1">m(7)GTP pyrophosphatase</shortName>
        <ecNumber evidence="1">3.6.1.-</ecNumber>
    </recommendedName>
</protein>